<organism>
    <name type="scientific">Homo sapiens</name>
    <name type="common">Human</name>
    <dbReference type="NCBI Taxonomy" id="9606"/>
    <lineage>
        <taxon>Eukaryota</taxon>
        <taxon>Metazoa</taxon>
        <taxon>Chordata</taxon>
        <taxon>Craniata</taxon>
        <taxon>Vertebrata</taxon>
        <taxon>Euteleostomi</taxon>
        <taxon>Mammalia</taxon>
        <taxon>Eutheria</taxon>
        <taxon>Euarchontoglires</taxon>
        <taxon>Primates</taxon>
        <taxon>Haplorrhini</taxon>
        <taxon>Catarrhini</taxon>
        <taxon>Hominidae</taxon>
        <taxon>Homo</taxon>
    </lineage>
</organism>
<evidence type="ECO:0000269" key="1">
    <source>
    </source>
</evidence>
<evidence type="ECO:0000269" key="2">
    <source>
    </source>
</evidence>
<evidence type="ECO:0000269" key="3">
    <source>
    </source>
</evidence>
<evidence type="ECO:0000269" key="4">
    <source>
    </source>
</evidence>
<evidence type="ECO:0000269" key="5">
    <source>
    </source>
</evidence>
<evidence type="ECO:0000269" key="6">
    <source>
    </source>
</evidence>
<evidence type="ECO:0000269" key="7">
    <source>
    </source>
</evidence>
<evidence type="ECO:0000269" key="8">
    <source>
    </source>
</evidence>
<evidence type="ECO:0000269" key="9">
    <source>
    </source>
</evidence>
<evidence type="ECO:0000305" key="10"/>
<evidence type="ECO:0000305" key="11">
    <source>
    </source>
</evidence>
<evidence type="ECO:0000305" key="12">
    <source>
    </source>
</evidence>
<evidence type="ECO:0007744" key="13">
    <source>
        <dbReference type="PDB" id="1J1L"/>
    </source>
</evidence>
<evidence type="ECO:0007744" key="14">
    <source>
        <dbReference type="PDB" id="3ACL"/>
    </source>
</evidence>
<evidence type="ECO:0007829" key="15">
    <source>
        <dbReference type="PDB" id="4EWA"/>
    </source>
</evidence>
<evidence type="ECO:0007829" key="16">
    <source>
        <dbReference type="PDB" id="5JCT"/>
    </source>
</evidence>
<evidence type="ECO:0007829" key="17">
    <source>
        <dbReference type="PDB" id="6H1I"/>
    </source>
</evidence>
<evidence type="ECO:0007829" key="18">
    <source>
        <dbReference type="PDB" id="6N0J"/>
    </source>
</evidence>
<evidence type="ECO:0007829" key="19">
    <source>
        <dbReference type="PDB" id="6N0K"/>
    </source>
</evidence>
<reference key="1">
    <citation type="journal article" date="1997" name="J. Biol. Chem.">
        <title>Identification of pirin, a novel highly conserved nuclear protein.</title>
        <authorList>
            <person name="Wendler W.M.F."/>
            <person name="Kremmer E."/>
            <person name="Foerster R."/>
            <person name="Winnacker E.-L."/>
        </authorList>
    </citation>
    <scope>NUCLEOTIDE SEQUENCE [MRNA]</scope>
    <scope>PROPOSED FUNCTION</scope>
    <scope>SUBUNIT</scope>
    <scope>SUBCELLULAR LOCATION</scope>
    <scope>TISSUE SPECIFICITY</scope>
    <source>
        <tissue>Cervix carcinoma</tissue>
    </source>
</reference>
<reference key="2">
    <citation type="submission" date="2004-06" db="EMBL/GenBank/DDBJ databases">
        <title>Cloning of human full open reading frames in Gateway(TM) system entry vector (pDONR201).</title>
        <authorList>
            <person name="Ebert L."/>
            <person name="Schick M."/>
            <person name="Neubert P."/>
            <person name="Schatten R."/>
            <person name="Henze S."/>
            <person name="Korn B."/>
        </authorList>
    </citation>
    <scope>NUCLEOTIDE SEQUENCE [LARGE SCALE MRNA]</scope>
</reference>
<reference key="3">
    <citation type="submission" date="2004-10" db="EMBL/GenBank/DDBJ databases">
        <title>Cloning of human full-length CDSs in BD Creator(TM) system donor vector.</title>
        <authorList>
            <person name="Kalnine N."/>
            <person name="Chen X."/>
            <person name="Rolfs A."/>
            <person name="Halleck A."/>
            <person name="Hines L."/>
            <person name="Eisenstein S."/>
            <person name="Koundinya M."/>
            <person name="Raphael J."/>
            <person name="Moreira D."/>
            <person name="Kelley T."/>
            <person name="LaBaer J."/>
            <person name="Lin Y."/>
            <person name="Phelan M."/>
            <person name="Farmer A."/>
        </authorList>
    </citation>
    <scope>NUCLEOTIDE SEQUENCE [LARGE SCALE MRNA]</scope>
</reference>
<reference key="4">
    <citation type="journal article" date="2004" name="Genome Res.">
        <title>The status, quality, and expansion of the NIH full-length cDNA project: the Mammalian Gene Collection (MGC).</title>
        <authorList>
            <consortium name="The MGC Project Team"/>
        </authorList>
    </citation>
    <scope>NUCLEOTIDE SEQUENCE [LARGE SCALE MRNA]</scope>
    <source>
        <tissue>Placenta</tissue>
    </source>
</reference>
<reference key="5">
    <citation type="journal article" date="1999" name="Oncogene">
        <title>The Bcl-3 oncoprotein acts as a bridging factor between NF-kappaB/Rel and nuclear co-regulators.</title>
        <authorList>
            <person name="Dechend R."/>
            <person name="Hirano F."/>
            <person name="Lehmann K."/>
            <person name="Heissmeyer V."/>
            <person name="Ansieau S."/>
            <person name="Wulczyn F.G."/>
            <person name="Scheidereit C."/>
            <person name="Leutz A."/>
        </authorList>
    </citation>
    <scope>INTERACTION WITH BCL3</scope>
    <scope>IDENTIFICATION IN A COMPLEX WITH BLC3; NFKB1; PIR AND TARGET DNA</scope>
</reference>
<reference key="6">
    <citation type="journal article" date="2005" name="J. Biol. Chem.">
        <title>Structural and biochemical analysis reveal pirins to possess quercetinase activity.</title>
        <authorList>
            <person name="Adams M."/>
            <person name="Jia Z."/>
        </authorList>
    </citation>
    <scope>CATALYTIC ACTIVITY</scope>
    <scope>ACTIVITY REGULATION</scope>
    <scope>FUNCTION</scope>
</reference>
<reference key="7">
    <citation type="journal article" date="2007" name="Respir. Res.">
        <title>Upregulation of pirin expression by chronic cigarette smoking is associated with bronchial epithelial cell apoptosis.</title>
        <authorList>
            <person name="Gelbman B.D."/>
            <person name="Heguy A."/>
            <person name="O'Connor T.P."/>
            <person name="Zabner J."/>
            <person name="Crystal R.G."/>
        </authorList>
    </citation>
    <scope>FUNCTION</scope>
    <scope>INDUCTION</scope>
</reference>
<reference key="8">
    <citation type="journal article" date="2010" name="BMC Cell Biol.">
        <title>Pirin delocalization in melanoma progression identified by high content immuno-detection based approaches.</title>
        <authorList>
            <person name="Licciulli S."/>
            <person name="Luise C."/>
            <person name="Zanardi A."/>
            <person name="Giorgetti L."/>
            <person name="Viale G."/>
            <person name="Lanfrancone L."/>
            <person name="Carbone R."/>
            <person name="Alcalay M."/>
        </authorList>
    </citation>
    <scope>SUBCELLULAR LOCATION</scope>
    <scope>TISSUE SPECIFICITY</scope>
</reference>
<reference key="9">
    <citation type="journal article" date="2010" name="Bone">
        <title>Sex-specific effect of Pirin gene on bone mineral density in a cohort of 4000 Chinese.</title>
        <authorList>
            <person name="Tang N.L."/>
            <person name="Liao C.D."/>
            <person name="Ching J.K."/>
            <person name="Suen E.W."/>
            <person name="Chan I.H."/>
            <person name="Orwoll E."/>
            <person name="Ho S.C."/>
            <person name="Chan F.W."/>
            <person name="Kwok A.W."/>
            <person name="Kwok T."/>
            <person name="Woo J."/>
            <person name="Leung P.C."/>
        </authorList>
    </citation>
    <scope>POSSIBLE INFLUENCE OF PIR POLYMORPHISMS ON BONE MINERAL DENSITY</scope>
</reference>
<reference key="10">
    <citation type="journal article" date="2010" name="Leukemia">
        <title>Pirin downregulation is a feature of AML and leads to impairment of terminal myeloid differentiation.</title>
        <authorList>
            <person name="Licciulli S."/>
            <person name="Cambiaghi V."/>
            <person name="Scafetta G."/>
            <person name="Gruszka A.M."/>
            <person name="Alcalay M."/>
        </authorList>
    </citation>
    <scope>FUNCTION</scope>
    <scope>INDUCTION</scope>
</reference>
<reference key="11">
    <citation type="journal article" date="2011" name="BMC Syst. Biol.">
        <title>Initial characterization of the human central proteome.</title>
        <authorList>
            <person name="Burkard T.R."/>
            <person name="Planyavsky M."/>
            <person name="Kaupe I."/>
            <person name="Breitwieser F.P."/>
            <person name="Buerckstuemmer T."/>
            <person name="Bennett K.L."/>
            <person name="Superti-Furga G."/>
            <person name="Colinge J."/>
        </authorList>
    </citation>
    <scope>IDENTIFICATION BY MASS SPECTROMETRY [LARGE SCALE ANALYSIS]</scope>
</reference>
<reference key="12">
    <citation type="journal article" date="2012" name="Proc. Natl. Acad. Sci. U.S.A.">
        <title>N-terminal acetylome analyses and functional insights of the N-terminal acetyltransferase NatB.</title>
        <authorList>
            <person name="Van Damme P."/>
            <person name="Lasa M."/>
            <person name="Polevoda B."/>
            <person name="Gazquez C."/>
            <person name="Elosegui-Artola A."/>
            <person name="Kim D.S."/>
            <person name="De Juan-Pardo E."/>
            <person name="Demeyer K."/>
            <person name="Hole K."/>
            <person name="Larrea E."/>
            <person name="Timmerman E."/>
            <person name="Prieto J."/>
            <person name="Arnesen T."/>
            <person name="Sherman F."/>
            <person name="Gevaert K."/>
            <person name="Aldabe R."/>
        </authorList>
    </citation>
    <scope>IDENTIFICATION BY MASS SPECTROMETRY [LARGE SCALE ANALYSIS]</scope>
</reference>
<reference key="13">
    <citation type="journal article" date="2004" name="J. Biol. Chem.">
        <title>Crystal structure of human pirin: an iron-binding nuclear protein and transcription cofactor.</title>
        <authorList>
            <person name="Pang H."/>
            <person name="Bartlam M."/>
            <person name="Zeng Q."/>
            <person name="Miyatake H."/>
            <person name="Hisano T."/>
            <person name="Miki K."/>
            <person name="Wong L.L."/>
            <person name="Gao G.F."/>
            <person name="Rao Z."/>
        </authorList>
    </citation>
    <scope>X-RAY CRYSTALLOGRAPHY (2.1 ANGSTROMS) IN COMPLEX WITH IRON IONS</scope>
    <scope>COFACTOR</scope>
</reference>
<reference key="14">
    <citation type="journal article" date="2010" name="Nat. Chem. Biol.">
        <title>A small-molecule inhibitor shows that pirin regulates migration of melanoma cells.</title>
        <authorList>
            <person name="Miyazaki I."/>
            <person name="Simizu S."/>
            <person name="Okumura H."/>
            <person name="Takagi S."/>
            <person name="Osada H."/>
        </authorList>
    </citation>
    <scope>X-RAY CRYSTALLOGRAPHY (2.35 ANGSTROMS) IN COMPLEX WITH A SYNTHETIC INHIBITOR AND IRON IONS</scope>
    <scope>INTERACTION WITH BCL3</scope>
    <scope>COFACTOR</scope>
    <scope>FUNCTION</scope>
</reference>
<reference key="15">
    <citation type="journal article" date="2013" name="Proc. Natl. Acad. Sci. U.S.A.">
        <title>Pirin is an iron-dependent redox regulator of NF-kappaB.</title>
        <authorList>
            <person name="Liu F."/>
            <person name="Rehmani I."/>
            <person name="Esaki S."/>
            <person name="Fu R."/>
            <person name="Chen L."/>
            <person name="de Serrano V."/>
            <person name="Liu A."/>
        </authorList>
    </citation>
    <scope>X-RAY CRYSTALLOGRAPHY (1.56 ANGSTROMS)</scope>
    <scope>FUNCTION</scope>
</reference>
<gene>
    <name type="primary">PIR</name>
</gene>
<sequence length="290" mass="32113">MGSSKKVTLSVLSREQSEGVGARVRRSIGRPELKNLDPFLLFDEFKGGRPGGFPDHPHRGFETVSYLLEGGSMAHEDFCGHTGKMNPGDLQWMTAGRGILHAEMPCSEEPAHGLQLWVNLRSSEKMVEPQYQELKSEEIPKPSKDGVTVAVISGEALGIKSKVYTRTPTLYLDFKLDPGAKHSQPIPKGWTSFIYTISGDVYIGPDDAQQKIEPHHTAVLGEGDSVQVENKDPKRSHFVLIAGEPLREPVIQHGPFVMNTNEEISQAILDFRNAKNGFERAKTWKSKIGN</sequence>
<feature type="chain" id="PRO_0000214051" description="Pirin">
    <location>
        <begin position="1"/>
        <end position="290"/>
    </location>
</feature>
<feature type="binding site" evidence="2 7 13 14">
    <location>
        <position position="56"/>
    </location>
    <ligand>
        <name>Fe cation</name>
        <dbReference type="ChEBI" id="CHEBI:24875"/>
    </ligand>
</feature>
<feature type="binding site" evidence="2 7 13 14">
    <location>
        <position position="58"/>
    </location>
    <ligand>
        <name>Fe cation</name>
        <dbReference type="ChEBI" id="CHEBI:24875"/>
    </ligand>
</feature>
<feature type="binding site" evidence="2 7 13 14">
    <location>
        <position position="101"/>
    </location>
    <ligand>
        <name>Fe cation</name>
        <dbReference type="ChEBI" id="CHEBI:24875"/>
    </ligand>
</feature>
<feature type="binding site" evidence="2 7 13 14">
    <location>
        <position position="103"/>
    </location>
    <ligand>
        <name>Fe cation</name>
        <dbReference type="ChEBI" id="CHEBI:24875"/>
    </ligand>
</feature>
<feature type="sequence variant" id="VAR_050543" description="In dbSNP:rs34104000.">
    <original>V</original>
    <variation>A</variation>
    <location>
        <position position="228"/>
    </location>
</feature>
<feature type="sequence conflict" description="In Ref. 2; CAG46621." evidence="10" ref="2">
    <original>V</original>
    <variation>D</variation>
    <location>
        <position position="24"/>
    </location>
</feature>
<feature type="sequence conflict" description="In Ref. 2; CAG46621." evidence="10" ref="2">
    <original>K</original>
    <variation>R</variation>
    <location>
        <position position="162"/>
    </location>
</feature>
<feature type="strand" evidence="19">
    <location>
        <begin position="7"/>
        <end position="12"/>
    </location>
</feature>
<feature type="strand" evidence="19">
    <location>
        <begin position="15"/>
        <end position="18"/>
    </location>
</feature>
<feature type="strand" evidence="19">
    <location>
        <begin position="22"/>
        <end position="26"/>
    </location>
</feature>
<feature type="helix" evidence="16">
    <location>
        <begin position="31"/>
        <end position="33"/>
    </location>
</feature>
<feature type="strand" evidence="19">
    <location>
        <begin position="39"/>
        <end position="47"/>
    </location>
</feature>
<feature type="strand" evidence="19">
    <location>
        <begin position="52"/>
        <end position="67"/>
    </location>
</feature>
<feature type="strand" evidence="18">
    <location>
        <begin position="69"/>
        <end position="71"/>
    </location>
</feature>
<feature type="strand" evidence="19">
    <location>
        <begin position="73"/>
        <end position="77"/>
    </location>
</feature>
<feature type="strand" evidence="19">
    <location>
        <begin position="82"/>
        <end position="85"/>
    </location>
</feature>
<feature type="strand" evidence="19">
    <location>
        <begin position="90"/>
        <end position="94"/>
    </location>
</feature>
<feature type="strand" evidence="19">
    <location>
        <begin position="99"/>
        <end position="105"/>
    </location>
</feature>
<feature type="strand" evidence="19">
    <location>
        <begin position="107"/>
        <end position="109"/>
    </location>
</feature>
<feature type="strand" evidence="19">
    <location>
        <begin position="111"/>
        <end position="119"/>
    </location>
</feature>
<feature type="helix" evidence="19">
    <location>
        <begin position="122"/>
        <end position="124"/>
    </location>
</feature>
<feature type="strand" evidence="19">
    <location>
        <begin position="130"/>
        <end position="134"/>
    </location>
</feature>
<feature type="helix" evidence="19">
    <location>
        <begin position="136"/>
        <end position="138"/>
    </location>
</feature>
<feature type="strand" evidence="19">
    <location>
        <begin position="147"/>
        <end position="156"/>
    </location>
</feature>
<feature type="strand" evidence="19">
    <location>
        <begin position="169"/>
        <end position="176"/>
    </location>
</feature>
<feature type="strand" evidence="19">
    <location>
        <begin position="181"/>
        <end position="185"/>
    </location>
</feature>
<feature type="strand" evidence="19">
    <location>
        <begin position="191"/>
        <end position="199"/>
    </location>
</feature>
<feature type="strand" evidence="19">
    <location>
        <begin position="201"/>
        <end position="204"/>
    </location>
</feature>
<feature type="helix" evidence="17">
    <location>
        <begin position="206"/>
        <end position="208"/>
    </location>
</feature>
<feature type="strand" evidence="19">
    <location>
        <begin position="210"/>
        <end position="212"/>
    </location>
</feature>
<feature type="strand" evidence="19">
    <location>
        <begin position="216"/>
        <end position="220"/>
    </location>
</feature>
<feature type="strand" evidence="19">
    <location>
        <begin position="222"/>
        <end position="229"/>
    </location>
</feature>
<feature type="strand" evidence="19">
    <location>
        <begin position="232"/>
        <end position="234"/>
    </location>
</feature>
<feature type="strand" evidence="19">
    <location>
        <begin position="236"/>
        <end position="243"/>
    </location>
</feature>
<feature type="strand" evidence="19">
    <location>
        <begin position="251"/>
        <end position="253"/>
    </location>
</feature>
<feature type="strand" evidence="19">
    <location>
        <begin position="256"/>
        <end position="260"/>
    </location>
</feature>
<feature type="helix" evidence="19">
    <location>
        <begin position="261"/>
        <end position="273"/>
    </location>
</feature>
<feature type="helix" evidence="19">
    <location>
        <begin position="279"/>
        <end position="281"/>
    </location>
</feature>
<feature type="turn" evidence="15">
    <location>
        <begin position="287"/>
        <end position="289"/>
    </location>
</feature>
<name>PIR_HUMAN</name>
<comment type="function">
    <text evidence="3 4 5 7 8">Transcriptional coregulator of NF-kappa-B which facilitates binding of NF-kappa-B proteins to target kappa-B genes in a redox-state-dependent manner. May be required for efficient terminal myeloid maturation of hematopoietic cells. Has quercetin 2,3-dioxygenase activity (in vitro).</text>
</comment>
<comment type="catalytic activity">
    <reaction evidence="3">
        <text>quercetin + O2 = 2-(3,4-dihydroxybenzoyloxy)-4,6-dihydroxybenzoate + CO</text>
        <dbReference type="Rhea" id="RHEA:15381"/>
        <dbReference type="ChEBI" id="CHEBI:15379"/>
        <dbReference type="ChEBI" id="CHEBI:17245"/>
        <dbReference type="ChEBI" id="CHEBI:57628"/>
        <dbReference type="ChEBI" id="CHEBI:57694"/>
        <dbReference type="EC" id="1.13.11.24"/>
    </reaction>
</comment>
<comment type="cofactor">
    <cofactor evidence="2 7">
        <name>Fe cation</name>
        <dbReference type="ChEBI" id="CHEBI:24875"/>
    </cofactor>
    <text evidence="2 7">Binds 1 Fe cation per subunit.</text>
</comment>
<comment type="activity regulation">
    <text evidence="3">Inhibited by kojic acid, sodium diethyldithiocarbamate and 1,10-phenanthroline monohydrochloride.</text>
</comment>
<comment type="pathway">
    <text evidence="11">Flavonoid metabolism; quercetin degradation.</text>
</comment>
<comment type="subunit">
    <text evidence="1 2 7 9">May interact with NF1/CTF1. Interacts with BCL3. Identified in a complex comprised of PIR, BLC3, NFKB1 and target DNA.</text>
</comment>
<comment type="subcellular location">
    <subcellularLocation>
        <location evidence="6 9">Nucleus</location>
    </subcellularLocation>
    <subcellularLocation>
        <location evidence="6">Cytoplasm</location>
    </subcellularLocation>
    <text evidence="6 9">Predominantly localized in dot-like subnuclear structures. Cytoplasmic localization of PIR seems to positively correlate with melanoma progression.</text>
</comment>
<comment type="tissue specificity">
    <text evidence="6 9">Highly expressed in a subset of melanomas. Detected at very low levels in most tissues (at protein level). Expressed in all tissues, with highest level of expression in heart and liver.</text>
</comment>
<comment type="induction">
    <text evidence="4 5">Up-regulated in CD34(+) cells upon myelomonocytic differentiation. Down-regulated in many acute myeloid leukemias. Up-regulated in primary bronchial epithelial cells exposed to cigarette smoke extract.</text>
</comment>
<comment type="polymorphism">
    <text evidence="12">Genetic variations in PIR might have a sex-specific influence on bone mineral density differences in some populations, as reported by PubMed:19766747. In a cohort of 4000 Chinese, a significant statistical association has been identified, in women but not in men, between the intronic SNP rs5935970 and lumbar spine bone mineral density, and between a haplotype composed of three SNPs with bone mineral density at other sites.</text>
</comment>
<comment type="similarity">
    <text evidence="10">Belongs to the pirin family.</text>
</comment>
<dbReference type="EC" id="1.13.11.24" evidence="3"/>
<dbReference type="EMBL" id="Y07868">
    <property type="protein sequence ID" value="CAA69195.1"/>
    <property type="molecule type" value="mRNA"/>
</dbReference>
<dbReference type="EMBL" id="Y07867">
    <property type="protein sequence ID" value="CAA69194.1"/>
    <property type="molecule type" value="mRNA"/>
</dbReference>
<dbReference type="EMBL" id="CR541822">
    <property type="protein sequence ID" value="CAG46621.1"/>
    <property type="molecule type" value="mRNA"/>
</dbReference>
<dbReference type="EMBL" id="BT019583">
    <property type="protein sequence ID" value="AAV38390.1"/>
    <property type="molecule type" value="mRNA"/>
</dbReference>
<dbReference type="EMBL" id="BT019584">
    <property type="protein sequence ID" value="AAV38391.1"/>
    <property type="molecule type" value="mRNA"/>
</dbReference>
<dbReference type="EMBL" id="BC002517">
    <property type="protein sequence ID" value="AAH02517.1"/>
    <property type="molecule type" value="mRNA"/>
</dbReference>
<dbReference type="CCDS" id="CCDS14167.1"/>
<dbReference type="RefSeq" id="NP_001018119.1">
    <property type="nucleotide sequence ID" value="NM_001018109.3"/>
</dbReference>
<dbReference type="RefSeq" id="NP_003653.1">
    <property type="nucleotide sequence ID" value="NM_003662.4"/>
</dbReference>
<dbReference type="PDB" id="1J1L">
    <property type="method" value="X-ray"/>
    <property type="resolution" value="2.10 A"/>
    <property type="chains" value="A=1-290"/>
</dbReference>
<dbReference type="PDB" id="3ACL">
    <property type="method" value="X-ray"/>
    <property type="resolution" value="2.35 A"/>
    <property type="chains" value="A=2-290"/>
</dbReference>
<dbReference type="PDB" id="4ERO">
    <property type="method" value="X-ray"/>
    <property type="resolution" value="2.65 A"/>
    <property type="chains" value="A=1-290"/>
</dbReference>
<dbReference type="PDB" id="4EWA">
    <property type="method" value="X-ray"/>
    <property type="resolution" value="2.47 A"/>
    <property type="chains" value="A=1-290"/>
</dbReference>
<dbReference type="PDB" id="4EWD">
    <property type="method" value="X-ray"/>
    <property type="resolution" value="2.15 A"/>
    <property type="chains" value="A=1-290"/>
</dbReference>
<dbReference type="PDB" id="4EWE">
    <property type="method" value="X-ray"/>
    <property type="resolution" value="1.56 A"/>
    <property type="chains" value="A=1-290"/>
</dbReference>
<dbReference type="PDB" id="4GUL">
    <property type="method" value="X-ray"/>
    <property type="resolution" value="1.80 A"/>
    <property type="chains" value="A=3-290"/>
</dbReference>
<dbReference type="PDB" id="4HLT">
    <property type="method" value="X-ray"/>
    <property type="resolution" value="1.70 A"/>
    <property type="chains" value="A=3-290"/>
</dbReference>
<dbReference type="PDB" id="5JCT">
    <property type="method" value="X-ray"/>
    <property type="resolution" value="1.73 A"/>
    <property type="chains" value="A=1-290"/>
</dbReference>
<dbReference type="PDB" id="6H1H">
    <property type="method" value="X-ray"/>
    <property type="resolution" value="1.54 A"/>
    <property type="chains" value="A=1-290"/>
</dbReference>
<dbReference type="PDB" id="6H1I">
    <property type="method" value="X-ray"/>
    <property type="resolution" value="1.69 A"/>
    <property type="chains" value="A=1-290"/>
</dbReference>
<dbReference type="PDB" id="6N0J">
    <property type="method" value="X-ray"/>
    <property type="resolution" value="1.79 A"/>
    <property type="chains" value="A=2-290"/>
</dbReference>
<dbReference type="PDB" id="6N0K">
    <property type="method" value="X-ray"/>
    <property type="resolution" value="1.46 A"/>
    <property type="chains" value="A=2-290"/>
</dbReference>
<dbReference type="PDBsum" id="1J1L"/>
<dbReference type="PDBsum" id="3ACL"/>
<dbReference type="PDBsum" id="4ERO"/>
<dbReference type="PDBsum" id="4EWA"/>
<dbReference type="PDBsum" id="4EWD"/>
<dbReference type="PDBsum" id="4EWE"/>
<dbReference type="PDBsum" id="4GUL"/>
<dbReference type="PDBsum" id="4HLT"/>
<dbReference type="PDBsum" id="5JCT"/>
<dbReference type="PDBsum" id="6H1H"/>
<dbReference type="PDBsum" id="6H1I"/>
<dbReference type="PDBsum" id="6N0J"/>
<dbReference type="PDBsum" id="6N0K"/>
<dbReference type="SMR" id="O00625"/>
<dbReference type="BioGRID" id="114114">
    <property type="interactions" value="83"/>
</dbReference>
<dbReference type="FunCoup" id="O00625">
    <property type="interactions" value="1022"/>
</dbReference>
<dbReference type="IntAct" id="O00625">
    <property type="interactions" value="8"/>
</dbReference>
<dbReference type="MINT" id="O00625"/>
<dbReference type="STRING" id="9606.ENSP00000369786"/>
<dbReference type="BindingDB" id="O00625"/>
<dbReference type="ChEMBL" id="CHEMBL2010627"/>
<dbReference type="iPTMnet" id="O00625"/>
<dbReference type="PhosphoSitePlus" id="O00625"/>
<dbReference type="BioMuta" id="PIR"/>
<dbReference type="jPOST" id="O00625"/>
<dbReference type="MassIVE" id="O00625"/>
<dbReference type="PaxDb" id="9606-ENSP00000369786"/>
<dbReference type="PeptideAtlas" id="O00625"/>
<dbReference type="ProteomicsDB" id="47999"/>
<dbReference type="Pumba" id="O00625"/>
<dbReference type="TopDownProteomics" id="O00625"/>
<dbReference type="Antibodypedia" id="358">
    <property type="antibodies" value="213 antibodies from 30 providers"/>
</dbReference>
<dbReference type="DNASU" id="8544"/>
<dbReference type="Ensembl" id="ENST00000380420.10">
    <property type="protein sequence ID" value="ENSP00000369785.5"/>
    <property type="gene ID" value="ENSG00000087842.11"/>
</dbReference>
<dbReference type="Ensembl" id="ENST00000380421.3">
    <property type="protein sequence ID" value="ENSP00000369786.3"/>
    <property type="gene ID" value="ENSG00000087842.11"/>
</dbReference>
<dbReference type="GeneID" id="8544"/>
<dbReference type="KEGG" id="hsa:8544"/>
<dbReference type="MANE-Select" id="ENST00000380420.10">
    <property type="protein sequence ID" value="ENSP00000369785.5"/>
    <property type="RefSeq nucleotide sequence ID" value="NM_001018109.3"/>
    <property type="RefSeq protein sequence ID" value="NP_001018119.1"/>
</dbReference>
<dbReference type="UCSC" id="uc004cwu.5">
    <property type="organism name" value="human"/>
</dbReference>
<dbReference type="AGR" id="HGNC:30048"/>
<dbReference type="CTD" id="8544"/>
<dbReference type="DisGeNET" id="8544"/>
<dbReference type="GeneCards" id="PIR"/>
<dbReference type="HGNC" id="HGNC:30048">
    <property type="gene designation" value="PIR"/>
</dbReference>
<dbReference type="HPA" id="ENSG00000087842">
    <property type="expression patterns" value="Low tissue specificity"/>
</dbReference>
<dbReference type="MIM" id="300931">
    <property type="type" value="gene"/>
</dbReference>
<dbReference type="neXtProt" id="NX_O00625"/>
<dbReference type="OpenTargets" id="ENSG00000087842"/>
<dbReference type="PharmGKB" id="PA134870022"/>
<dbReference type="VEuPathDB" id="HostDB:ENSG00000087842"/>
<dbReference type="eggNOG" id="ENOG502QQ5A">
    <property type="taxonomic scope" value="Eukaryota"/>
</dbReference>
<dbReference type="GeneTree" id="ENSGT00390000008044"/>
<dbReference type="HOGENOM" id="CLU_045717_0_1_1"/>
<dbReference type="InParanoid" id="O00625"/>
<dbReference type="OMA" id="TPWHPHR"/>
<dbReference type="OrthoDB" id="198735at2759"/>
<dbReference type="PAN-GO" id="O00625">
    <property type="GO annotations" value="3 GO annotations based on evolutionary models"/>
</dbReference>
<dbReference type="PhylomeDB" id="O00625"/>
<dbReference type="TreeFam" id="TF300002"/>
<dbReference type="PathwayCommons" id="O00625"/>
<dbReference type="Reactome" id="R-HSA-8935690">
    <property type="pathway name" value="Digestion"/>
</dbReference>
<dbReference type="SignaLink" id="O00625"/>
<dbReference type="UniPathway" id="UPA00724"/>
<dbReference type="BioGRID-ORCS" id="8544">
    <property type="hits" value="4 hits in 783 CRISPR screens"/>
</dbReference>
<dbReference type="ChiTaRS" id="PIR">
    <property type="organism name" value="human"/>
</dbReference>
<dbReference type="EvolutionaryTrace" id="O00625"/>
<dbReference type="GeneWiki" id="PIR_(gene)"/>
<dbReference type="GenomeRNAi" id="8544"/>
<dbReference type="Pharos" id="O00625">
    <property type="development level" value="Tchem"/>
</dbReference>
<dbReference type="PRO" id="PR:O00625"/>
<dbReference type="Proteomes" id="UP000005640">
    <property type="component" value="Chromosome X"/>
</dbReference>
<dbReference type="RNAct" id="O00625">
    <property type="molecule type" value="protein"/>
</dbReference>
<dbReference type="Bgee" id="ENSG00000087842">
    <property type="expression patterns" value="Expressed in C1 segment of cervical spinal cord and 186 other cell types or tissues"/>
</dbReference>
<dbReference type="ExpressionAtlas" id="O00625">
    <property type="expression patterns" value="baseline and differential"/>
</dbReference>
<dbReference type="GO" id="GO:0005737">
    <property type="term" value="C:cytoplasm"/>
    <property type="evidence" value="ECO:0000314"/>
    <property type="project" value="UniProtKB"/>
</dbReference>
<dbReference type="GO" id="GO:0005829">
    <property type="term" value="C:cytosol"/>
    <property type="evidence" value="ECO:0000314"/>
    <property type="project" value="HPA"/>
</dbReference>
<dbReference type="GO" id="GO:0016604">
    <property type="term" value="C:nuclear body"/>
    <property type="evidence" value="ECO:0000314"/>
    <property type="project" value="HPA"/>
</dbReference>
<dbReference type="GO" id="GO:0005654">
    <property type="term" value="C:nucleoplasm"/>
    <property type="evidence" value="ECO:0000314"/>
    <property type="project" value="HPA"/>
</dbReference>
<dbReference type="GO" id="GO:0005634">
    <property type="term" value="C:nucleus"/>
    <property type="evidence" value="ECO:0000314"/>
    <property type="project" value="UniProtKB"/>
</dbReference>
<dbReference type="GO" id="GO:0046872">
    <property type="term" value="F:metal ion binding"/>
    <property type="evidence" value="ECO:0000314"/>
    <property type="project" value="UniProtKB"/>
</dbReference>
<dbReference type="GO" id="GO:0008127">
    <property type="term" value="F:quercetin 2,3-dioxygenase activity"/>
    <property type="evidence" value="ECO:0000314"/>
    <property type="project" value="UniProtKB"/>
</dbReference>
<dbReference type="GO" id="GO:0003712">
    <property type="term" value="F:transcription coregulator activity"/>
    <property type="evidence" value="ECO:0000315"/>
    <property type="project" value="UniProtKB"/>
</dbReference>
<dbReference type="GO" id="GO:0007586">
    <property type="term" value="P:digestion"/>
    <property type="evidence" value="ECO:0000304"/>
    <property type="project" value="Reactome"/>
</dbReference>
<dbReference type="GO" id="GO:0030224">
    <property type="term" value="P:monocyte differentiation"/>
    <property type="evidence" value="ECO:0000315"/>
    <property type="project" value="MGI"/>
</dbReference>
<dbReference type="GO" id="GO:0006366">
    <property type="term" value="P:transcription by RNA polymerase II"/>
    <property type="evidence" value="ECO:0000304"/>
    <property type="project" value="ProtInc"/>
</dbReference>
<dbReference type="CDD" id="cd20288">
    <property type="entry name" value="cupin_pirin-like_C"/>
    <property type="match status" value="1"/>
</dbReference>
<dbReference type="CDD" id="cd02909">
    <property type="entry name" value="cupin_pirin_N"/>
    <property type="match status" value="1"/>
</dbReference>
<dbReference type="FunFam" id="2.60.120.10:FF:000055">
    <property type="entry name" value="pirin"/>
    <property type="match status" value="1"/>
</dbReference>
<dbReference type="Gene3D" id="2.60.120.10">
    <property type="entry name" value="Jelly Rolls"/>
    <property type="match status" value="2"/>
</dbReference>
<dbReference type="InterPro" id="IPR012093">
    <property type="entry name" value="Pirin"/>
</dbReference>
<dbReference type="InterPro" id="IPR008778">
    <property type="entry name" value="Pirin_C_dom"/>
</dbReference>
<dbReference type="InterPro" id="IPR003829">
    <property type="entry name" value="Pirin_N_dom"/>
</dbReference>
<dbReference type="InterPro" id="IPR014710">
    <property type="entry name" value="RmlC-like_jellyroll"/>
</dbReference>
<dbReference type="InterPro" id="IPR011051">
    <property type="entry name" value="RmlC_Cupin_sf"/>
</dbReference>
<dbReference type="PANTHER" id="PTHR13903:SF8">
    <property type="entry name" value="PIRIN"/>
    <property type="match status" value="1"/>
</dbReference>
<dbReference type="PANTHER" id="PTHR13903">
    <property type="entry name" value="PIRIN-RELATED"/>
    <property type="match status" value="1"/>
</dbReference>
<dbReference type="Pfam" id="PF02678">
    <property type="entry name" value="Pirin"/>
    <property type="match status" value="1"/>
</dbReference>
<dbReference type="Pfam" id="PF05726">
    <property type="entry name" value="Pirin_C"/>
    <property type="match status" value="1"/>
</dbReference>
<dbReference type="PIRSF" id="PIRSF006232">
    <property type="entry name" value="Pirin"/>
    <property type="match status" value="1"/>
</dbReference>
<dbReference type="SUPFAM" id="SSF51182">
    <property type="entry name" value="RmlC-like cupins"/>
    <property type="match status" value="1"/>
</dbReference>
<protein>
    <recommendedName>
        <fullName>Pirin</fullName>
        <ecNumber evidence="3">1.13.11.24</ecNumber>
    </recommendedName>
    <alternativeName>
        <fullName>Probable quercetin 2,3-dioxygenase PIR</fullName>
        <shortName>Probable quercetinase</shortName>
    </alternativeName>
</protein>
<proteinExistence type="evidence at protein level"/>
<accession>O00625</accession>
<accession>Q5U0G0</accession>
<accession>Q6FHD2</accession>
<keyword id="KW-0002">3D-structure</keyword>
<keyword id="KW-0963">Cytoplasm</keyword>
<keyword id="KW-0223">Dioxygenase</keyword>
<keyword id="KW-0408">Iron</keyword>
<keyword id="KW-0479">Metal-binding</keyword>
<keyword id="KW-0539">Nucleus</keyword>
<keyword id="KW-0560">Oxidoreductase</keyword>
<keyword id="KW-1267">Proteomics identification</keyword>
<keyword id="KW-1185">Reference proteome</keyword>
<keyword id="KW-0804">Transcription</keyword>
<keyword id="KW-0805">Transcription regulation</keyword>